<gene>
    <name type="primary">pheA</name>
    <name type="ordered locus">Z3891</name>
    <name type="ordered locus">ECs3462</name>
</gene>
<name>CMPDT_ECO57</name>
<proteinExistence type="inferred from homology"/>
<reference key="1">
    <citation type="journal article" date="2001" name="Nature">
        <title>Genome sequence of enterohaemorrhagic Escherichia coli O157:H7.</title>
        <authorList>
            <person name="Perna N.T."/>
            <person name="Plunkett G. III"/>
            <person name="Burland V."/>
            <person name="Mau B."/>
            <person name="Glasner J.D."/>
            <person name="Rose D.J."/>
            <person name="Mayhew G.F."/>
            <person name="Evans P.S."/>
            <person name="Gregor J."/>
            <person name="Kirkpatrick H.A."/>
            <person name="Posfai G."/>
            <person name="Hackett J."/>
            <person name="Klink S."/>
            <person name="Boutin A."/>
            <person name="Shao Y."/>
            <person name="Miller L."/>
            <person name="Grotbeck E.J."/>
            <person name="Davis N.W."/>
            <person name="Lim A."/>
            <person name="Dimalanta E.T."/>
            <person name="Potamousis K."/>
            <person name="Apodaca J."/>
            <person name="Anantharaman T.S."/>
            <person name="Lin J."/>
            <person name="Yen G."/>
            <person name="Schwartz D.C."/>
            <person name="Welch R.A."/>
            <person name="Blattner F.R."/>
        </authorList>
    </citation>
    <scope>NUCLEOTIDE SEQUENCE [LARGE SCALE GENOMIC DNA]</scope>
    <source>
        <strain>O157:H7 / EDL933 / ATCC 700927 / EHEC</strain>
    </source>
</reference>
<reference key="2">
    <citation type="journal article" date="2001" name="DNA Res.">
        <title>Complete genome sequence of enterohemorrhagic Escherichia coli O157:H7 and genomic comparison with a laboratory strain K-12.</title>
        <authorList>
            <person name="Hayashi T."/>
            <person name="Makino K."/>
            <person name="Ohnishi M."/>
            <person name="Kurokawa K."/>
            <person name="Ishii K."/>
            <person name="Yokoyama K."/>
            <person name="Han C.-G."/>
            <person name="Ohtsubo E."/>
            <person name="Nakayama K."/>
            <person name="Murata T."/>
            <person name="Tanaka M."/>
            <person name="Tobe T."/>
            <person name="Iida T."/>
            <person name="Takami H."/>
            <person name="Honda T."/>
            <person name="Sasakawa C."/>
            <person name="Ogasawara N."/>
            <person name="Yasunaga T."/>
            <person name="Kuhara S."/>
            <person name="Shiba T."/>
            <person name="Hattori M."/>
            <person name="Shinagawa H."/>
        </authorList>
    </citation>
    <scope>NUCLEOTIDE SEQUENCE [LARGE SCALE GENOMIC DNA]</scope>
    <source>
        <strain>O157:H7 / Sakai / RIMD 0509952 / EHEC</strain>
    </source>
</reference>
<dbReference type="EC" id="5.4.99.5" evidence="1"/>
<dbReference type="EC" id="4.2.1.51" evidence="1"/>
<dbReference type="EMBL" id="AE005174">
    <property type="protein sequence ID" value="AAG57710.1"/>
    <property type="molecule type" value="Genomic_DNA"/>
</dbReference>
<dbReference type="EMBL" id="BA000007">
    <property type="protein sequence ID" value="BAB36885.1"/>
    <property type="molecule type" value="Genomic_DNA"/>
</dbReference>
<dbReference type="PIR" id="F91061">
    <property type="entry name" value="F91061"/>
</dbReference>
<dbReference type="RefSeq" id="NP_311489.1">
    <property type="nucleotide sequence ID" value="NC_002695.1"/>
</dbReference>
<dbReference type="RefSeq" id="WP_000200120.1">
    <property type="nucleotide sequence ID" value="NZ_VOAI01000040.1"/>
</dbReference>
<dbReference type="SMR" id="P0A9J9"/>
<dbReference type="STRING" id="155864.Z3891"/>
<dbReference type="GeneID" id="914858"/>
<dbReference type="KEGG" id="ece:Z3891"/>
<dbReference type="KEGG" id="ecs:ECs_3462"/>
<dbReference type="PATRIC" id="fig|386585.9.peg.3616"/>
<dbReference type="eggNOG" id="COG0077">
    <property type="taxonomic scope" value="Bacteria"/>
</dbReference>
<dbReference type="eggNOG" id="COG1605">
    <property type="taxonomic scope" value="Bacteria"/>
</dbReference>
<dbReference type="HOGENOM" id="CLU_035008_1_0_6"/>
<dbReference type="OMA" id="PLMIYRE"/>
<dbReference type="UniPathway" id="UPA00120">
    <property type="reaction ID" value="UER00203"/>
</dbReference>
<dbReference type="UniPathway" id="UPA00121">
    <property type="reaction ID" value="UER00345"/>
</dbReference>
<dbReference type="Proteomes" id="UP000000558">
    <property type="component" value="Chromosome"/>
</dbReference>
<dbReference type="Proteomes" id="UP000002519">
    <property type="component" value="Chromosome"/>
</dbReference>
<dbReference type="GO" id="GO:0005737">
    <property type="term" value="C:cytoplasm"/>
    <property type="evidence" value="ECO:0007669"/>
    <property type="project" value="UniProtKB-SubCell"/>
</dbReference>
<dbReference type="GO" id="GO:0004106">
    <property type="term" value="F:chorismate mutase activity"/>
    <property type="evidence" value="ECO:0007669"/>
    <property type="project" value="UniProtKB-EC"/>
</dbReference>
<dbReference type="GO" id="GO:0004664">
    <property type="term" value="F:prephenate dehydratase activity"/>
    <property type="evidence" value="ECO:0007669"/>
    <property type="project" value="UniProtKB-EC"/>
</dbReference>
<dbReference type="GO" id="GO:0046417">
    <property type="term" value="P:chorismate metabolic process"/>
    <property type="evidence" value="ECO:0007669"/>
    <property type="project" value="InterPro"/>
</dbReference>
<dbReference type="GO" id="GO:0009094">
    <property type="term" value="P:L-phenylalanine biosynthetic process"/>
    <property type="evidence" value="ECO:0007669"/>
    <property type="project" value="UniProtKB-UniPathway"/>
</dbReference>
<dbReference type="CDD" id="cd04905">
    <property type="entry name" value="ACT_CM-PDT"/>
    <property type="match status" value="1"/>
</dbReference>
<dbReference type="CDD" id="cd13631">
    <property type="entry name" value="PBP2_Ct-PDT_like"/>
    <property type="match status" value="1"/>
</dbReference>
<dbReference type="FunFam" id="1.20.59.10:FF:000002">
    <property type="entry name" value="Chorismate mutase/prephenate dehydratase"/>
    <property type="match status" value="1"/>
</dbReference>
<dbReference type="FunFam" id="3.30.70.260:FF:000022">
    <property type="entry name" value="Chorismate mutase/prephenate dehydratase"/>
    <property type="match status" value="1"/>
</dbReference>
<dbReference type="FunFam" id="3.40.190.10:FF:000034">
    <property type="entry name" value="Chorismate mutase/prephenate dehydratase"/>
    <property type="match status" value="1"/>
</dbReference>
<dbReference type="FunFam" id="3.40.190.10:FF:000044">
    <property type="entry name" value="Chorismate mutase/prephenate dehydratase"/>
    <property type="match status" value="1"/>
</dbReference>
<dbReference type="Gene3D" id="3.30.70.260">
    <property type="match status" value="1"/>
</dbReference>
<dbReference type="Gene3D" id="1.20.59.10">
    <property type="entry name" value="Chorismate mutase"/>
    <property type="match status" value="1"/>
</dbReference>
<dbReference type="Gene3D" id="3.40.190.10">
    <property type="entry name" value="Periplasmic binding protein-like II"/>
    <property type="match status" value="2"/>
</dbReference>
<dbReference type="InterPro" id="IPR045865">
    <property type="entry name" value="ACT-like_dom_sf"/>
</dbReference>
<dbReference type="InterPro" id="IPR002912">
    <property type="entry name" value="ACT_dom"/>
</dbReference>
<dbReference type="InterPro" id="IPR008242">
    <property type="entry name" value="Chor_mutase/pphenate_deHydtase"/>
</dbReference>
<dbReference type="InterPro" id="IPR036263">
    <property type="entry name" value="Chorismate_II_sf"/>
</dbReference>
<dbReference type="InterPro" id="IPR036979">
    <property type="entry name" value="CM_dom_sf"/>
</dbReference>
<dbReference type="InterPro" id="IPR002701">
    <property type="entry name" value="CM_II_prokaryot"/>
</dbReference>
<dbReference type="InterPro" id="IPR010952">
    <property type="entry name" value="CM_P_1"/>
</dbReference>
<dbReference type="InterPro" id="IPR001086">
    <property type="entry name" value="Preph_deHydtase"/>
</dbReference>
<dbReference type="InterPro" id="IPR018528">
    <property type="entry name" value="Preph_deHydtase_CS"/>
</dbReference>
<dbReference type="NCBIfam" id="TIGR01797">
    <property type="entry name" value="CM_P_1"/>
    <property type="match status" value="1"/>
</dbReference>
<dbReference type="NCBIfam" id="NF007910">
    <property type="entry name" value="PRK10622.1"/>
    <property type="match status" value="1"/>
</dbReference>
<dbReference type="NCBIfam" id="NF008865">
    <property type="entry name" value="PRK11898.1"/>
    <property type="match status" value="1"/>
</dbReference>
<dbReference type="PANTHER" id="PTHR21022">
    <property type="entry name" value="PREPHENATE DEHYDRATASE P PROTEIN"/>
    <property type="match status" value="1"/>
</dbReference>
<dbReference type="PANTHER" id="PTHR21022:SF19">
    <property type="entry name" value="PREPHENATE DEHYDRATASE-RELATED"/>
    <property type="match status" value="1"/>
</dbReference>
<dbReference type="Pfam" id="PF01817">
    <property type="entry name" value="CM_2"/>
    <property type="match status" value="1"/>
</dbReference>
<dbReference type="Pfam" id="PF00800">
    <property type="entry name" value="PDT"/>
    <property type="match status" value="1"/>
</dbReference>
<dbReference type="PIRSF" id="PIRSF001500">
    <property type="entry name" value="Chor_mut_pdt_Ppr"/>
    <property type="match status" value="1"/>
</dbReference>
<dbReference type="SMART" id="SM00830">
    <property type="entry name" value="CM_2"/>
    <property type="match status" value="1"/>
</dbReference>
<dbReference type="SUPFAM" id="SSF55021">
    <property type="entry name" value="ACT-like"/>
    <property type="match status" value="1"/>
</dbReference>
<dbReference type="SUPFAM" id="SSF48600">
    <property type="entry name" value="Chorismate mutase II"/>
    <property type="match status" value="1"/>
</dbReference>
<dbReference type="SUPFAM" id="SSF53850">
    <property type="entry name" value="Periplasmic binding protein-like II"/>
    <property type="match status" value="1"/>
</dbReference>
<dbReference type="PROSITE" id="PS51671">
    <property type="entry name" value="ACT"/>
    <property type="match status" value="1"/>
</dbReference>
<dbReference type="PROSITE" id="PS51168">
    <property type="entry name" value="CHORISMATE_MUT_2"/>
    <property type="match status" value="1"/>
</dbReference>
<dbReference type="PROSITE" id="PS00857">
    <property type="entry name" value="PREPHENATE_DEHYDR_1"/>
    <property type="match status" value="1"/>
</dbReference>
<dbReference type="PROSITE" id="PS00858">
    <property type="entry name" value="PREPHENATE_DEHYDR_2"/>
    <property type="match status" value="1"/>
</dbReference>
<dbReference type="PROSITE" id="PS51171">
    <property type="entry name" value="PREPHENATE_DEHYDR_3"/>
    <property type="match status" value="1"/>
</dbReference>
<sequence>MTSENPLLALREKISALDEKLLALLAERRELAVEVGKAKLLSHRPVRDIDRERDLLERLITLGKAHHLDAHYITRLFQLIIEDSVLTQQALLQQHLNKINPHSARIAFLGPKGSYSHLAARQYAARHFEQFIESGCAKFADIFNQVETGQADYAVVPIENTSSGAINDVYDLLQHTSLSIVGEMTLTIDHCLLVSGTTDLSTINTVYSHPQPFQQCSKFLNRYPHWKIEYTESTSAAMEKVAQAKSPHVAALGSEAGGTLYGLQVLERIEANQRQNFTRFVVLARKAINVSDQVPAKTTLLMATGQQAGALVEALLVLRNHNLIMTRLESRPIHGNPWEEMFYLDIQANLESAEMQKALKELGEITRSMKVLGCYPSENVVPVDPT</sequence>
<protein>
    <recommendedName>
        <fullName evidence="1">Bifunctional chorismate mutase/prephenate dehydratase</fullName>
    </recommendedName>
    <alternativeName>
        <fullName evidence="1">Chorismate mutase-prephenate dehydratase</fullName>
    </alternativeName>
    <alternativeName>
        <fullName evidence="1">P-protein</fullName>
    </alternativeName>
    <domain>
        <recommendedName>
            <fullName evidence="1">Chorismate mutase</fullName>
            <shortName evidence="1">CM</shortName>
            <ecNumber evidence="1">5.4.99.5</ecNumber>
        </recommendedName>
    </domain>
    <domain>
        <recommendedName>
            <fullName evidence="1">Prephenate dehydratase</fullName>
            <shortName evidence="1">PDT</shortName>
            <ecNumber evidence="1">4.2.1.51</ecNumber>
        </recommendedName>
    </domain>
</protein>
<comment type="function">
    <text evidence="1">Catalyzes the Claisen rearrangement of chorismate to prephenate and the decarboxylation/dehydration of prephenate to phenylpyruvate.</text>
</comment>
<comment type="catalytic activity">
    <reaction evidence="1">
        <text>chorismate = prephenate</text>
        <dbReference type="Rhea" id="RHEA:13897"/>
        <dbReference type="ChEBI" id="CHEBI:29748"/>
        <dbReference type="ChEBI" id="CHEBI:29934"/>
        <dbReference type="EC" id="5.4.99.5"/>
    </reaction>
</comment>
<comment type="catalytic activity">
    <reaction evidence="1">
        <text>prephenate + H(+) = 3-phenylpyruvate + CO2 + H2O</text>
        <dbReference type="Rhea" id="RHEA:21648"/>
        <dbReference type="ChEBI" id="CHEBI:15377"/>
        <dbReference type="ChEBI" id="CHEBI:15378"/>
        <dbReference type="ChEBI" id="CHEBI:16526"/>
        <dbReference type="ChEBI" id="CHEBI:18005"/>
        <dbReference type="ChEBI" id="CHEBI:29934"/>
        <dbReference type="EC" id="4.2.1.51"/>
    </reaction>
</comment>
<comment type="pathway">
    <text evidence="1">Amino-acid biosynthesis; L-phenylalanine biosynthesis; phenylpyruvate from prephenate: step 1/1.</text>
</comment>
<comment type="pathway">
    <text evidence="1">Metabolic intermediate biosynthesis; prephenate biosynthesis; prephenate from chorismate: step 1/1.</text>
</comment>
<comment type="subcellular location">
    <subcellularLocation>
        <location evidence="1">Cytoplasm</location>
    </subcellularLocation>
</comment>
<evidence type="ECO:0000250" key="1">
    <source>
        <dbReference type="UniProtKB" id="P0A9J8"/>
    </source>
</evidence>
<evidence type="ECO:0000255" key="2"/>
<evidence type="ECO:0000255" key="3">
    <source>
        <dbReference type="PROSITE-ProRule" id="PRU00515"/>
    </source>
</evidence>
<evidence type="ECO:0000255" key="4">
    <source>
        <dbReference type="PROSITE-ProRule" id="PRU00517"/>
    </source>
</evidence>
<evidence type="ECO:0000255" key="5">
    <source>
        <dbReference type="PROSITE-ProRule" id="PRU01007"/>
    </source>
</evidence>
<keyword id="KW-0028">Amino-acid biosynthesis</keyword>
<keyword id="KW-0057">Aromatic amino acid biosynthesis</keyword>
<keyword id="KW-0963">Cytoplasm</keyword>
<keyword id="KW-0413">Isomerase</keyword>
<keyword id="KW-0456">Lyase</keyword>
<keyword id="KW-0511">Multifunctional enzyme</keyword>
<keyword id="KW-0584">Phenylalanine biosynthesis</keyword>
<keyword id="KW-1185">Reference proteome</keyword>
<organism>
    <name type="scientific">Escherichia coli O157:H7</name>
    <dbReference type="NCBI Taxonomy" id="83334"/>
    <lineage>
        <taxon>Bacteria</taxon>
        <taxon>Pseudomonadati</taxon>
        <taxon>Pseudomonadota</taxon>
        <taxon>Gammaproteobacteria</taxon>
        <taxon>Enterobacterales</taxon>
        <taxon>Enterobacteriaceae</taxon>
        <taxon>Escherichia</taxon>
    </lineage>
</organism>
<accession>P0A9J9</accession>
<accession>P07022</accession>
<accession>P78204</accession>
<feature type="chain" id="PRO_0000119186" description="Bifunctional chorismate mutase/prephenate dehydratase">
    <location>
        <begin position="1"/>
        <end position="386"/>
    </location>
</feature>
<feature type="domain" description="Chorismate mutase" evidence="3">
    <location>
        <begin position="1"/>
        <end position="92"/>
    </location>
</feature>
<feature type="domain" description="Prephenate dehydratase" evidence="4">
    <location>
        <begin position="105"/>
        <end position="285"/>
    </location>
</feature>
<feature type="domain" description="ACT" evidence="5">
    <location>
        <begin position="299"/>
        <end position="376"/>
    </location>
</feature>
<feature type="binding site" evidence="1">
    <location>
        <position position="11"/>
    </location>
    <ligand>
        <name>substrate</name>
    </ligand>
</feature>
<feature type="binding site" evidence="1">
    <location>
        <position position="28"/>
    </location>
    <ligand>
        <name>substrate</name>
    </ligand>
</feature>
<feature type="binding site" evidence="1">
    <location>
        <position position="39"/>
    </location>
    <ligand>
        <name>substrate</name>
    </ligand>
</feature>
<feature type="binding site" evidence="1">
    <location>
        <position position="48"/>
    </location>
    <ligand>
        <name>substrate</name>
    </ligand>
</feature>
<feature type="binding site" evidence="1">
    <location>
        <position position="52"/>
    </location>
    <ligand>
        <name>substrate</name>
    </ligand>
</feature>
<feature type="binding site" evidence="1">
    <location>
        <position position="84"/>
    </location>
    <ligand>
        <name>substrate</name>
    </ligand>
</feature>
<feature type="binding site" evidence="1">
    <location>
        <position position="88"/>
    </location>
    <ligand>
        <name>substrate</name>
    </ligand>
</feature>
<feature type="site" description="Essential for prephenate dehydratase activity" evidence="2">
    <location>
        <position position="278"/>
    </location>
</feature>